<gene>
    <name type="primary">VPS10</name>
    <name type="ORF">NECHADRAFT_30652</name>
</gene>
<protein>
    <recommendedName>
        <fullName>Vacuolar protein sorting/targeting protein 10</fullName>
    </recommendedName>
    <alternativeName>
        <fullName>Carboxypeptidase Y receptor</fullName>
        <shortName>CPY receptor</shortName>
    </alternativeName>
    <alternativeName>
        <fullName>Sortilin VPS10</fullName>
    </alternativeName>
    <alternativeName>
        <fullName>Vacuolar carboxypeptidase sorting receptor VPS10</fullName>
    </alternativeName>
</protein>
<proteinExistence type="inferred from homology"/>
<reference key="1">
    <citation type="journal article" date="2009" name="PLoS Genet.">
        <title>The genome of Nectria haematococca: contribution of supernumerary chromosomes to gene expansion.</title>
        <authorList>
            <person name="Coleman J.J."/>
            <person name="Rounsley S.D."/>
            <person name="Rodriguez-Carres M."/>
            <person name="Kuo A."/>
            <person name="Wasmann C.C."/>
            <person name="Grimwood J."/>
            <person name="Schmutz J."/>
            <person name="Taga M."/>
            <person name="White G.J."/>
            <person name="Zhou S."/>
            <person name="Schwartz D.C."/>
            <person name="Freitag M."/>
            <person name="Ma L.-J."/>
            <person name="Danchin E.G.J."/>
            <person name="Henrissat B."/>
            <person name="Coutinho P.M."/>
            <person name="Nelson D.R."/>
            <person name="Straney D."/>
            <person name="Napoli C.A."/>
            <person name="Barker B.M."/>
            <person name="Gribskov M."/>
            <person name="Rep M."/>
            <person name="Kroken S."/>
            <person name="Molnar I."/>
            <person name="Rensing C."/>
            <person name="Kennell J.C."/>
            <person name="Zamora J."/>
            <person name="Farman M.L."/>
            <person name="Selker E.U."/>
            <person name="Salamov A."/>
            <person name="Shapiro H."/>
            <person name="Pangilinan J."/>
            <person name="Lindquist E."/>
            <person name="Lamers C."/>
            <person name="Grigoriev I.V."/>
            <person name="Geiser D.M."/>
            <person name="Covert S.F."/>
            <person name="Temporini E."/>
            <person name="VanEtten H.D."/>
        </authorList>
    </citation>
    <scope>NUCLEOTIDE SEQUENCE [LARGE SCALE GENOMIC DNA]</scope>
    <source>
        <strain>ATCC MYA-4622 / CBS 123669 / FGSC 9596 / NRRL 45880 / 77-13-4</strain>
    </source>
</reference>
<evidence type="ECO:0000250" key="1"/>
<evidence type="ECO:0000255" key="2"/>
<evidence type="ECO:0000256" key="3">
    <source>
        <dbReference type="SAM" id="MobiDB-lite"/>
    </source>
</evidence>
<evidence type="ECO:0000305" key="4"/>
<comment type="function">
    <text evidence="1">Functions as a sorting receptor in the Golgi compartment required for the intracellular sorting and delivery of soluble vacuolar proteins, like carboxypeptidase Y (CPY) and proteinase A. Executes multiple rounds of sorting by cycling between the late Golgi and a prevacuolar endosome-like compartment (By similarity).</text>
</comment>
<comment type="subcellular location">
    <subcellularLocation>
        <location evidence="1">Golgi apparatus</location>
        <location evidence="1">trans-Golgi network membrane</location>
        <topology evidence="1">Multi-pass membrane protein</topology>
    </subcellularLocation>
    <subcellularLocation>
        <location evidence="1">Prevacuolar compartment membrane</location>
        <topology evidence="1">Multi-pass membrane protein</topology>
    </subcellularLocation>
    <text evidence="1">Cycles between the Golgi apparatus and the prevacuolar compartment.</text>
</comment>
<comment type="similarity">
    <text evidence="4">Belongs to the VPS10-related sortilin family.</text>
</comment>
<sequence>MMRSVAWAALSWRVFWLSLLWTAVSAKQDKPKIDSVMLEHPPLNLNYFEDSDVIVFQDIEERNIYRSEDAGFTWNKVKELPDGGSAFLYLHPFESSTAFVLTKDRKHYKTEDRGKSWTEFDSGSMPSAFQPDTLIFHAGDPKRIIFNGMNCDGIFCDEETTYTLDGFKTIQPLRPSTSGCWWAKSNTEFTTGDEDLDKTRILCIVTDPLSIFKTSQKLCVSDTFFKKENNGKYQEFEPTLDSNRDVTGVVSLAAVKSFILVASSSANSDEMALYVTSNANQWHRAMFPSDDSHDHSHQINQEAYTVLESTNYSIQIDVMTSHPSRPMGVIFTSNSNGTYFTENIPYTNRNIKGHVDFEKISGIQGIFLVNTVENGKDVDEGSAEKVVVTQITFDDGRTFEPVKAGDQRIHLHSMTQINNIGRIFSSPAPGLVMGNGNTGKSLGKFDDSNLYVSDDAGVTWKQALEGPHKYEFGDSGTILVAVRDSAKEDVDKVSYSLNYGDTWESVPLPKDLKIRPALLTTTQDSTSLKFLLIGEHDKRYHMVALDFEALEKSTCGDKDMESWNARVDDKGQATCIMGRKQTYKRRTKKADCFIKSNFKDPEPINEPCDCTDADFECDYNFQRDPEDRTVCKRVGSIPMPQGACKDKDDKFKGSSGWRMIPGNQCKRTKGAQKDDEVERKCSEGGGGNSGGDGSSPSVPANGEISHKKNDFDSEALDMQKYYLIRGDSSSGTDETIIARPIGERTGNSVQVENKVWLTSDHGKSWKRILDQEDIMKIFHHDYFKDVMFFSTKTDKILYTIDRGQTFHSFKTPVASDDFTLSFHPDKKDWLIWVGKHCDDVSGSKSCFPAASISTDRGDHWKTLVRYATKCEFTGNSAYKYRPLTQIVCLVHQEENLESPKTIVTINDFLADDKLIHNGTVASFATMNEFILATDEVTEAGKEKAGLQAIASLDGQHFEAAQFPYNFHDSHSSLYTVLDSSNHAVNLFVATDLSDGRRRGSIIKSNSNGTTYVLSASNVNSDEAGYVDFEKVAGLEGVTLINVVANPDKKDGKKEIQTKISHNDGAEWDFLPPPSKDVDGKAYKCSSAGDSKCALHLHHYTERDNKRRTFSASKAIGLIFGVGNVGSTLGEMKDADTFMSADGGINWKNVKKGAWTWQYGDQGSIIVLAERATHGNGAKTKTVSYSLDEGETWNEYEFTDKEVTILDLTSVKTGAARNFLVWCRSDSKQLFSVNIDFTGLTDKACEYKDDASASDYELWSPKHPLQKNDCFFGHVAKYLRKKKDRKCFNKATLSLLHGYENCECTRRDFECAYNYELDNHGQCSLVPGFQPLSGEEWCKQNPNETTWFEPTGYRRLPLTTCKDGVELDKTSDEHACEGYEDEFKRKHRTSGWVIFFAVVIPIGLAAAIGWYVWRNWSGKFGQIRLGDNSSTFDSDQPWIKYPVIAISAVAAVAAAMPLVIISLWRSATGVYERVSNRSRGGNWSRRYTTRDSFARSDYSMVDDDEGELLGEESDEEV</sequence>
<keyword id="KW-0325">Glycoprotein</keyword>
<keyword id="KW-0333">Golgi apparatus</keyword>
<keyword id="KW-0472">Membrane</keyword>
<keyword id="KW-0653">Protein transport</keyword>
<keyword id="KW-0675">Receptor</keyword>
<keyword id="KW-1185">Reference proteome</keyword>
<keyword id="KW-0677">Repeat</keyword>
<keyword id="KW-0732">Signal</keyword>
<keyword id="KW-0812">Transmembrane</keyword>
<keyword id="KW-1133">Transmembrane helix</keyword>
<keyword id="KW-0813">Transport</keyword>
<organism>
    <name type="scientific">Fusarium vanettenii (strain ATCC MYA-4622 / CBS 123669 / FGSC 9596 / NRRL 45880 / 77-13-4)</name>
    <name type="common">Fusarium solani subsp. pisi</name>
    <dbReference type="NCBI Taxonomy" id="660122"/>
    <lineage>
        <taxon>Eukaryota</taxon>
        <taxon>Fungi</taxon>
        <taxon>Dikarya</taxon>
        <taxon>Ascomycota</taxon>
        <taxon>Pezizomycotina</taxon>
        <taxon>Sordariomycetes</taxon>
        <taxon>Hypocreomycetidae</taxon>
        <taxon>Hypocreales</taxon>
        <taxon>Nectriaceae</taxon>
        <taxon>Fusarium</taxon>
        <taxon>Fusarium solani species complex</taxon>
        <taxon>Fusarium vanettenii</taxon>
    </lineage>
</organism>
<dbReference type="EMBL" id="GG698896">
    <property type="protein sequence ID" value="EEU48543.1"/>
    <property type="molecule type" value="Genomic_DNA"/>
</dbReference>
<dbReference type="RefSeq" id="XP_003054256.1">
    <property type="nucleotide sequence ID" value="XM_003054210.1"/>
</dbReference>
<dbReference type="SMR" id="C7YGZ0"/>
<dbReference type="FunCoup" id="C7YGZ0">
    <property type="interactions" value="195"/>
</dbReference>
<dbReference type="STRING" id="660122.C7YGZ0"/>
<dbReference type="GlyCosmos" id="C7YGZ0">
    <property type="glycosylation" value="5 sites, No reported glycans"/>
</dbReference>
<dbReference type="EnsemblFungi" id="NechaT30652">
    <property type="protein sequence ID" value="NechaP30652"/>
    <property type="gene ID" value="NechaG30652"/>
</dbReference>
<dbReference type="GeneID" id="9676870"/>
<dbReference type="KEGG" id="nhe:NECHADRAFT_30652"/>
<dbReference type="VEuPathDB" id="FungiDB:NECHADRAFT_30652"/>
<dbReference type="eggNOG" id="KOG3511">
    <property type="taxonomic scope" value="Eukaryota"/>
</dbReference>
<dbReference type="HOGENOM" id="CLU_000700_0_0_1"/>
<dbReference type="InParanoid" id="C7YGZ0"/>
<dbReference type="OMA" id="ATMSEFI"/>
<dbReference type="OrthoDB" id="443634at2759"/>
<dbReference type="Proteomes" id="UP000005206">
    <property type="component" value="Unassembled WGS sequence"/>
</dbReference>
<dbReference type="GO" id="GO:0005829">
    <property type="term" value="C:cytosol"/>
    <property type="evidence" value="ECO:0007669"/>
    <property type="project" value="GOC"/>
</dbReference>
<dbReference type="GO" id="GO:0005794">
    <property type="term" value="C:Golgi apparatus"/>
    <property type="evidence" value="ECO:0007669"/>
    <property type="project" value="UniProtKB-SubCell"/>
</dbReference>
<dbReference type="GO" id="GO:0016020">
    <property type="term" value="C:membrane"/>
    <property type="evidence" value="ECO:0007669"/>
    <property type="project" value="UniProtKB-KW"/>
</dbReference>
<dbReference type="GO" id="GO:0006895">
    <property type="term" value="P:Golgi to endosome transport"/>
    <property type="evidence" value="ECO:0007669"/>
    <property type="project" value="TreeGrafter"/>
</dbReference>
<dbReference type="GO" id="GO:0006896">
    <property type="term" value="P:Golgi to vacuole transport"/>
    <property type="evidence" value="ECO:0007669"/>
    <property type="project" value="TreeGrafter"/>
</dbReference>
<dbReference type="GO" id="GO:0006623">
    <property type="term" value="P:protein targeting to vacuole"/>
    <property type="evidence" value="ECO:0007669"/>
    <property type="project" value="TreeGrafter"/>
</dbReference>
<dbReference type="CDD" id="cd15482">
    <property type="entry name" value="Sialidase_non-viral"/>
    <property type="match status" value="1"/>
</dbReference>
<dbReference type="FunFam" id="3.30.60.270:FF:000005">
    <property type="entry name" value="Sortilin"/>
    <property type="match status" value="2"/>
</dbReference>
<dbReference type="Gene3D" id="2.10.70.80">
    <property type="match status" value="2"/>
</dbReference>
<dbReference type="Gene3D" id="3.30.60.270">
    <property type="match status" value="2"/>
</dbReference>
<dbReference type="Gene3D" id="2.130.10.10">
    <property type="entry name" value="YVTN repeat-like/Quinoprotein amine dehydrogenase"/>
    <property type="match status" value="1"/>
</dbReference>
<dbReference type="InterPro" id="IPR031777">
    <property type="entry name" value="Sortilin_C"/>
</dbReference>
<dbReference type="InterPro" id="IPR031778">
    <property type="entry name" value="Sortilin_N"/>
</dbReference>
<dbReference type="InterPro" id="IPR006581">
    <property type="entry name" value="VPS10"/>
</dbReference>
<dbReference type="InterPro" id="IPR050310">
    <property type="entry name" value="VPS10-sortilin"/>
</dbReference>
<dbReference type="InterPro" id="IPR015943">
    <property type="entry name" value="WD40/YVTN_repeat-like_dom_sf"/>
</dbReference>
<dbReference type="PANTHER" id="PTHR12106">
    <property type="entry name" value="SORTILIN RELATED"/>
    <property type="match status" value="1"/>
</dbReference>
<dbReference type="PANTHER" id="PTHR12106:SF27">
    <property type="entry name" value="SORTILIN-RELATED RECEPTOR"/>
    <property type="match status" value="1"/>
</dbReference>
<dbReference type="Pfam" id="PF15902">
    <property type="entry name" value="Sortilin-Vps10"/>
    <property type="match status" value="2"/>
</dbReference>
<dbReference type="Pfam" id="PF15901">
    <property type="entry name" value="Sortilin_C"/>
    <property type="match status" value="2"/>
</dbReference>
<dbReference type="SMART" id="SM00602">
    <property type="entry name" value="VPS10"/>
    <property type="match status" value="2"/>
</dbReference>
<dbReference type="SUPFAM" id="SSF110296">
    <property type="entry name" value="Oligoxyloglucan reducing end-specific cellobiohydrolase"/>
    <property type="match status" value="2"/>
</dbReference>
<accession>C7YGZ0</accession>
<name>VPS10_FUSV7</name>
<feature type="signal peptide" evidence="2">
    <location>
        <begin position="1"/>
        <end position="26"/>
    </location>
</feature>
<feature type="chain" id="PRO_0000407524" description="Vacuolar protein sorting/targeting protein 10">
    <location>
        <begin position="27"/>
        <end position="1516"/>
    </location>
</feature>
<feature type="topological domain" description="Lumenal" evidence="2">
    <location>
        <begin position="27"/>
        <end position="1390"/>
    </location>
</feature>
<feature type="transmembrane region" description="Helical" evidence="2">
    <location>
        <begin position="1391"/>
        <end position="1411"/>
    </location>
</feature>
<feature type="topological domain" description="Cytoplasmic" evidence="2">
    <location>
        <begin position="1412"/>
        <end position="1441"/>
    </location>
</feature>
<feature type="transmembrane region" description="Helical" evidence="2">
    <location>
        <begin position="1442"/>
        <end position="1462"/>
    </location>
</feature>
<feature type="topological domain" description="Lumenal" evidence="2">
    <location>
        <begin position="1463"/>
        <end position="1516"/>
    </location>
</feature>
<feature type="repeat" description="BNR 1">
    <location>
        <begin position="108"/>
        <end position="118"/>
    </location>
</feature>
<feature type="repeat" description="BNR 2">
    <location>
        <begin position="390"/>
        <end position="400"/>
    </location>
</feature>
<feature type="repeat" description="BNR 3">
    <location>
        <begin position="451"/>
        <end position="461"/>
    </location>
</feature>
<feature type="repeat" description="BNR 4">
    <location>
        <begin position="495"/>
        <end position="504"/>
    </location>
</feature>
<feature type="repeat" description="BNR 5">
    <location>
        <begin position="756"/>
        <end position="766"/>
    </location>
</feature>
<feature type="repeat" description="BNR 6">
    <location>
        <begin position="798"/>
        <end position="807"/>
    </location>
</feature>
<feature type="repeat" description="BNR 7">
    <location>
        <begin position="852"/>
        <end position="861"/>
    </location>
</feature>
<feature type="repeat" description="BNR 8">
    <location>
        <begin position="1137"/>
        <end position="1147"/>
    </location>
</feature>
<feature type="repeat" description="BNR 9">
    <location>
        <begin position="1184"/>
        <end position="1193"/>
    </location>
</feature>
<feature type="region of interest" description="Disordered" evidence="3">
    <location>
        <begin position="642"/>
        <end position="709"/>
    </location>
</feature>
<feature type="compositionally biased region" description="Basic and acidic residues" evidence="3">
    <location>
        <begin position="671"/>
        <end position="682"/>
    </location>
</feature>
<feature type="compositionally biased region" description="Gly residues" evidence="3">
    <location>
        <begin position="683"/>
        <end position="693"/>
    </location>
</feature>
<feature type="glycosylation site" description="N-linked (GlcNAc...) asparagine" evidence="2">
    <location>
        <position position="311"/>
    </location>
</feature>
<feature type="glycosylation site" description="N-linked (GlcNAc...) asparagine" evidence="2">
    <location>
        <position position="336"/>
    </location>
</feature>
<feature type="glycosylation site" description="N-linked (GlcNAc...) asparagine" evidence="2">
    <location>
        <position position="917"/>
    </location>
</feature>
<feature type="glycosylation site" description="N-linked (GlcNAc...) asparagine" evidence="2">
    <location>
        <position position="1007"/>
    </location>
</feature>
<feature type="glycosylation site" description="N-linked (GlcNAc...) asparagine" evidence="2">
    <location>
        <position position="1342"/>
    </location>
</feature>